<gene>
    <name evidence="1" type="primary">nhaA</name>
    <name type="ordered locus">BH04040</name>
</gene>
<name>NHAA_BARHE</name>
<sequence length="453" mass="48965">MSDLSSNRLPNRASRVTNQALSAIERFLHIEALSGVVLLLAAAAALMFANSEYASLYESFWHTPLGFNFGHFTLSWDLHFWVNDALMAVFFLVAGMEIRREIHEGALADFKQAILPIVAAIGGVCLPAIIYFSFNFNSGQIHGWAVPTATDIAFALGILALLGKKIPSNLHIILLSLAIIDDIIAVLIIAFFYSTNIDPSGLVIAIAGIALVLFFQWIGFASAWLYILPGAIIWWGLMVTGIHPSLAGVILGMMTPVLPTRTLIAPLTILSNAMQILQEKNTKTDLHHISTALKKMRKGQRDIIAPVTRIQKALHPWVAYGVMPIFAFANAGVSFANFDLSSDKSFLIVLGVVIGLFIGKPLGIITASYLAVKSGLCRLPPQMTWAGILLIGFLAGIGFTMSIFVSMLAFKDIVLLDSAKIGVLCGSGLSALIGLGYGLIYIKRNKKASHSSQ</sequence>
<keyword id="KW-0050">Antiport</keyword>
<keyword id="KW-0997">Cell inner membrane</keyword>
<keyword id="KW-1003">Cell membrane</keyword>
<keyword id="KW-0406">Ion transport</keyword>
<keyword id="KW-0472">Membrane</keyword>
<keyword id="KW-0915">Sodium</keyword>
<keyword id="KW-0739">Sodium transport</keyword>
<keyword id="KW-0812">Transmembrane</keyword>
<keyword id="KW-1133">Transmembrane helix</keyword>
<keyword id="KW-0813">Transport</keyword>
<dbReference type="EMBL" id="BX897699">
    <property type="protein sequence ID" value="CAF27213.1"/>
    <property type="molecule type" value="Genomic_DNA"/>
</dbReference>
<dbReference type="RefSeq" id="WP_011180340.1">
    <property type="nucleotide sequence ID" value="NZ_LRIJ02000001.1"/>
</dbReference>
<dbReference type="SMR" id="Q6G5K1"/>
<dbReference type="PaxDb" id="283166-BH04040"/>
<dbReference type="EnsemblBacteria" id="CAF27213">
    <property type="protein sequence ID" value="CAF27213"/>
    <property type="gene ID" value="BH04040"/>
</dbReference>
<dbReference type="GeneID" id="92985062"/>
<dbReference type="KEGG" id="bhe:BH04040"/>
<dbReference type="eggNOG" id="COG3004">
    <property type="taxonomic scope" value="Bacteria"/>
</dbReference>
<dbReference type="OrthoDB" id="9808135at2"/>
<dbReference type="Proteomes" id="UP000000421">
    <property type="component" value="Chromosome"/>
</dbReference>
<dbReference type="GO" id="GO:0005886">
    <property type="term" value="C:plasma membrane"/>
    <property type="evidence" value="ECO:0007669"/>
    <property type="project" value="UniProtKB-SubCell"/>
</dbReference>
<dbReference type="GO" id="GO:0015385">
    <property type="term" value="F:sodium:proton antiporter activity"/>
    <property type="evidence" value="ECO:0007669"/>
    <property type="project" value="TreeGrafter"/>
</dbReference>
<dbReference type="GO" id="GO:0006885">
    <property type="term" value="P:regulation of pH"/>
    <property type="evidence" value="ECO:0007669"/>
    <property type="project" value="InterPro"/>
</dbReference>
<dbReference type="Gene3D" id="1.20.1530.10">
    <property type="entry name" value="Na+/H+ antiporter like domain"/>
    <property type="match status" value="1"/>
</dbReference>
<dbReference type="HAMAP" id="MF_01844">
    <property type="entry name" value="NhaA"/>
    <property type="match status" value="1"/>
</dbReference>
<dbReference type="InterPro" id="IPR023171">
    <property type="entry name" value="Na/H_antiporter_dom_sf"/>
</dbReference>
<dbReference type="InterPro" id="IPR004670">
    <property type="entry name" value="NhaA"/>
</dbReference>
<dbReference type="NCBIfam" id="TIGR00773">
    <property type="entry name" value="NhaA"/>
    <property type="match status" value="1"/>
</dbReference>
<dbReference type="PANTHER" id="PTHR30341:SF0">
    <property type="entry name" value="NA(+)_H(+) ANTIPORTER NHAA"/>
    <property type="match status" value="1"/>
</dbReference>
<dbReference type="PANTHER" id="PTHR30341">
    <property type="entry name" value="SODIUM ION/PROTON ANTIPORTER NHAA-RELATED"/>
    <property type="match status" value="1"/>
</dbReference>
<dbReference type="Pfam" id="PF06965">
    <property type="entry name" value="Na_H_antiport_1"/>
    <property type="match status" value="1"/>
</dbReference>
<comment type="function">
    <text evidence="1">Na(+)/H(+) antiporter that extrudes sodium in exchange for external protons.</text>
</comment>
<comment type="catalytic activity">
    <reaction evidence="1">
        <text>Na(+)(in) + 2 H(+)(out) = Na(+)(out) + 2 H(+)(in)</text>
        <dbReference type="Rhea" id="RHEA:29251"/>
        <dbReference type="ChEBI" id="CHEBI:15378"/>
        <dbReference type="ChEBI" id="CHEBI:29101"/>
    </reaction>
    <physiologicalReaction direction="left-to-right" evidence="1">
        <dbReference type="Rhea" id="RHEA:29252"/>
    </physiologicalReaction>
</comment>
<comment type="subcellular location">
    <subcellularLocation>
        <location evidence="1">Cell inner membrane</location>
        <topology evidence="1">Multi-pass membrane protein</topology>
    </subcellularLocation>
</comment>
<comment type="similarity">
    <text evidence="1">Belongs to the NhaA Na(+)/H(+) (TC 2.A.33) antiporter family.</text>
</comment>
<reference key="1">
    <citation type="journal article" date="2004" name="Proc. Natl. Acad. Sci. U.S.A.">
        <title>The louse-borne human pathogen Bartonella quintana is a genomic derivative of the zoonotic agent Bartonella henselae.</title>
        <authorList>
            <person name="Alsmark U.C.M."/>
            <person name="Frank A.C."/>
            <person name="Karlberg E.O."/>
            <person name="Legault B.-A."/>
            <person name="Ardell D.H."/>
            <person name="Canbaeck B."/>
            <person name="Eriksson A.-S."/>
            <person name="Naeslund A.K."/>
            <person name="Handley S.A."/>
            <person name="Huvet M."/>
            <person name="La Scola B."/>
            <person name="Holmberg M."/>
            <person name="Andersson S.G.E."/>
        </authorList>
    </citation>
    <scope>NUCLEOTIDE SEQUENCE [LARGE SCALE GENOMIC DNA]</scope>
    <source>
        <strain>ATCC 49882 / DSM 28221 / CCUG 30454 / Houston 1</strain>
    </source>
</reference>
<accession>Q6G5K1</accession>
<proteinExistence type="inferred from homology"/>
<protein>
    <recommendedName>
        <fullName evidence="1">Na(+)/H(+) antiporter NhaA</fullName>
    </recommendedName>
    <alternativeName>
        <fullName evidence="1">Sodium/proton antiporter NhaA</fullName>
    </alternativeName>
</protein>
<evidence type="ECO:0000255" key="1">
    <source>
        <dbReference type="HAMAP-Rule" id="MF_01844"/>
    </source>
</evidence>
<feature type="chain" id="PRO_0000334236" description="Na(+)/H(+) antiporter NhaA">
    <location>
        <begin position="1"/>
        <end position="453"/>
    </location>
</feature>
<feature type="transmembrane region" description="Helical" evidence="1">
    <location>
        <begin position="27"/>
        <end position="47"/>
    </location>
</feature>
<feature type="transmembrane region" description="Helical" evidence="1">
    <location>
        <begin position="78"/>
        <end position="98"/>
    </location>
</feature>
<feature type="transmembrane region" description="Helical" evidence="1">
    <location>
        <begin position="114"/>
        <end position="134"/>
    </location>
</feature>
<feature type="transmembrane region" description="Helical" evidence="1">
    <location>
        <begin position="143"/>
        <end position="163"/>
    </location>
</feature>
<feature type="transmembrane region" description="Helical" evidence="1">
    <location>
        <begin position="172"/>
        <end position="192"/>
    </location>
</feature>
<feature type="transmembrane region" description="Helical" evidence="1">
    <location>
        <begin position="201"/>
        <end position="221"/>
    </location>
</feature>
<feature type="transmembrane region" description="Helical" evidence="1">
    <location>
        <begin position="222"/>
        <end position="242"/>
    </location>
</feature>
<feature type="transmembrane region" description="Helical" evidence="1">
    <location>
        <begin position="249"/>
        <end position="269"/>
    </location>
</feature>
<feature type="transmembrane region" description="Helical" evidence="1">
    <location>
        <begin position="316"/>
        <end position="336"/>
    </location>
</feature>
<feature type="transmembrane region" description="Helical" evidence="1">
    <location>
        <begin position="346"/>
        <end position="366"/>
    </location>
</feature>
<feature type="transmembrane region" description="Helical" evidence="1">
    <location>
        <begin position="385"/>
        <end position="405"/>
    </location>
</feature>
<feature type="transmembrane region" description="Helical" evidence="1">
    <location>
        <begin position="421"/>
        <end position="441"/>
    </location>
</feature>
<organism>
    <name type="scientific">Bartonella henselae (strain ATCC 49882 / DSM 28221 / CCUG 30454 / Houston 1)</name>
    <name type="common">Rochalimaea henselae</name>
    <dbReference type="NCBI Taxonomy" id="283166"/>
    <lineage>
        <taxon>Bacteria</taxon>
        <taxon>Pseudomonadati</taxon>
        <taxon>Pseudomonadota</taxon>
        <taxon>Alphaproteobacteria</taxon>
        <taxon>Hyphomicrobiales</taxon>
        <taxon>Bartonellaceae</taxon>
        <taxon>Bartonella</taxon>
    </lineage>
</organism>